<sequence length="455" mass="51074">MIAHASRSLSIIGAGLAGSLLAILLSRQGWRITLYERRGDPRVADYESGRSINLALAERGRNALRQAGVEDEVMARAVMMRGRMVHPREGEPQLQRYGRDDSEVIWSIHRSDLNTTLLELAEQAGATVHFHRRLHTVDFDAGYARFIDDRDDSPHDIRFDTLIGADGAGSALRAAMNRRAPLGEDIAFLDHSYKELEIPPADDGSFRIERNALHIWPRGHYMCIALPNHEGTFTVTLFLPNQGDPSFATINTGAQAEALFAREFADTLPLIPNLRADWEQHPPGLLGTLTLDRWHQQGRAVLIGDAAHAMVPFHGQGMNCAFEDCVALARHLMEADDLEGAFAAFEAERKPNARAIQQMALENYLEMRDRVADPAFLLQRELEQELQRRWPTRFVPHYTMVTFLHTPYAEALRRTELQRDMLVAATTGHDSLDNIDWAALEAQIHAQLPVLEGAH</sequence>
<comment type="function">
    <text evidence="1">Catalyzes the hydroxylation of L-kynurenine (L-Kyn) to form 3-hydroxy-L-kynurenine (L-3OHKyn). Required for synthesis of quinolinic acid.</text>
</comment>
<comment type="catalytic activity">
    <reaction evidence="1">
        <text>L-kynurenine + NADPH + O2 + H(+) = 3-hydroxy-L-kynurenine + NADP(+) + H2O</text>
        <dbReference type="Rhea" id="RHEA:20545"/>
        <dbReference type="ChEBI" id="CHEBI:15377"/>
        <dbReference type="ChEBI" id="CHEBI:15378"/>
        <dbReference type="ChEBI" id="CHEBI:15379"/>
        <dbReference type="ChEBI" id="CHEBI:57783"/>
        <dbReference type="ChEBI" id="CHEBI:57959"/>
        <dbReference type="ChEBI" id="CHEBI:58125"/>
        <dbReference type="ChEBI" id="CHEBI:58349"/>
        <dbReference type="EC" id="1.14.13.9"/>
    </reaction>
</comment>
<comment type="cofactor">
    <cofactor evidence="1">
        <name>FAD</name>
        <dbReference type="ChEBI" id="CHEBI:57692"/>
    </cofactor>
</comment>
<comment type="pathway">
    <text evidence="1">Cofactor biosynthesis; NAD(+) biosynthesis; quinolinate from L-kynurenine: step 1/3.</text>
</comment>
<comment type="similarity">
    <text evidence="1">Belongs to the aromatic-ring hydroxylase family. KMO subfamily.</text>
</comment>
<proteinExistence type="inferred from homology"/>
<organism>
    <name type="scientific">Stenotrophomonas maltophilia (strain K279a)</name>
    <dbReference type="NCBI Taxonomy" id="522373"/>
    <lineage>
        <taxon>Bacteria</taxon>
        <taxon>Pseudomonadati</taxon>
        <taxon>Pseudomonadota</taxon>
        <taxon>Gammaproteobacteria</taxon>
        <taxon>Lysobacterales</taxon>
        <taxon>Lysobacteraceae</taxon>
        <taxon>Stenotrophomonas</taxon>
        <taxon>Stenotrophomonas maltophilia group</taxon>
    </lineage>
</organism>
<evidence type="ECO:0000255" key="1">
    <source>
        <dbReference type="HAMAP-Rule" id="MF_01971"/>
    </source>
</evidence>
<dbReference type="EC" id="1.14.13.9" evidence="1"/>
<dbReference type="EMBL" id="AM743169">
    <property type="protein sequence ID" value="CAQ46605.1"/>
    <property type="molecule type" value="Genomic_DNA"/>
</dbReference>
<dbReference type="RefSeq" id="WP_012480765.1">
    <property type="nucleotide sequence ID" value="NC_010943.1"/>
</dbReference>
<dbReference type="SMR" id="B2FL98"/>
<dbReference type="EnsemblBacteria" id="CAQ46605">
    <property type="protein sequence ID" value="CAQ46605"/>
    <property type="gene ID" value="Smlt3161"/>
</dbReference>
<dbReference type="KEGG" id="sml:Smlt3161"/>
<dbReference type="PATRIC" id="fig|522373.3.peg.2957"/>
<dbReference type="eggNOG" id="COG0654">
    <property type="taxonomic scope" value="Bacteria"/>
</dbReference>
<dbReference type="HOGENOM" id="CLU_023210_0_1_6"/>
<dbReference type="UniPathway" id="UPA00253">
    <property type="reaction ID" value="UER00328"/>
</dbReference>
<dbReference type="Proteomes" id="UP000008840">
    <property type="component" value="Chromosome"/>
</dbReference>
<dbReference type="GO" id="GO:0071949">
    <property type="term" value="F:FAD binding"/>
    <property type="evidence" value="ECO:0007669"/>
    <property type="project" value="InterPro"/>
</dbReference>
<dbReference type="GO" id="GO:0004502">
    <property type="term" value="F:kynurenine 3-monooxygenase activity"/>
    <property type="evidence" value="ECO:0007669"/>
    <property type="project" value="UniProtKB-UniRule"/>
</dbReference>
<dbReference type="GO" id="GO:0043420">
    <property type="term" value="P:anthranilate metabolic process"/>
    <property type="evidence" value="ECO:0007669"/>
    <property type="project" value="UniProtKB-UniRule"/>
</dbReference>
<dbReference type="GO" id="GO:0070189">
    <property type="term" value="P:kynurenine metabolic process"/>
    <property type="evidence" value="ECO:0007669"/>
    <property type="project" value="TreeGrafter"/>
</dbReference>
<dbReference type="GO" id="GO:0006569">
    <property type="term" value="P:L-tryptophan catabolic process"/>
    <property type="evidence" value="ECO:0007669"/>
    <property type="project" value="UniProtKB-UniRule"/>
</dbReference>
<dbReference type="GO" id="GO:0009435">
    <property type="term" value="P:NAD biosynthetic process"/>
    <property type="evidence" value="ECO:0007669"/>
    <property type="project" value="UniProtKB-UniPathway"/>
</dbReference>
<dbReference type="GO" id="GO:0019805">
    <property type="term" value="P:quinolinate biosynthetic process"/>
    <property type="evidence" value="ECO:0007669"/>
    <property type="project" value="UniProtKB-UniRule"/>
</dbReference>
<dbReference type="FunFam" id="3.50.50.60:FF:000185">
    <property type="entry name" value="Kynurenine 3-monooxygenase"/>
    <property type="match status" value="1"/>
</dbReference>
<dbReference type="Gene3D" id="3.50.50.60">
    <property type="entry name" value="FAD/NAD(P)-binding domain"/>
    <property type="match status" value="1"/>
</dbReference>
<dbReference type="HAMAP" id="MF_01971">
    <property type="entry name" value="Kynurenine_monooxygenase"/>
    <property type="match status" value="1"/>
</dbReference>
<dbReference type="InterPro" id="IPR002938">
    <property type="entry name" value="FAD-bd"/>
</dbReference>
<dbReference type="InterPro" id="IPR036188">
    <property type="entry name" value="FAD/NAD-bd_sf"/>
</dbReference>
<dbReference type="InterPro" id="IPR027545">
    <property type="entry name" value="Kynurenine_monooxygenase"/>
</dbReference>
<dbReference type="PANTHER" id="PTHR46028">
    <property type="entry name" value="KYNURENINE 3-MONOOXYGENASE"/>
    <property type="match status" value="1"/>
</dbReference>
<dbReference type="PANTHER" id="PTHR46028:SF2">
    <property type="entry name" value="KYNURENINE 3-MONOOXYGENASE"/>
    <property type="match status" value="1"/>
</dbReference>
<dbReference type="Pfam" id="PF01494">
    <property type="entry name" value="FAD_binding_3"/>
    <property type="match status" value="1"/>
</dbReference>
<dbReference type="PRINTS" id="PR00420">
    <property type="entry name" value="RNGMNOXGNASE"/>
</dbReference>
<dbReference type="SUPFAM" id="SSF51905">
    <property type="entry name" value="FAD/NAD(P)-binding domain"/>
    <property type="match status" value="1"/>
</dbReference>
<protein>
    <recommendedName>
        <fullName evidence="1">Kynurenine 3-monooxygenase</fullName>
        <ecNumber evidence="1">1.14.13.9</ecNumber>
    </recommendedName>
    <alternativeName>
        <fullName evidence="1">Kynurenine 3-hydroxylase</fullName>
    </alternativeName>
</protein>
<feature type="chain" id="PRO_0000361945" description="Kynurenine 3-monooxygenase">
    <location>
        <begin position="1"/>
        <end position="455"/>
    </location>
</feature>
<reference key="1">
    <citation type="journal article" date="2008" name="Genome Biol.">
        <title>The complete genome, comparative and functional analysis of Stenotrophomonas maltophilia reveals an organism heavily shielded by drug resistance determinants.</title>
        <authorList>
            <person name="Crossman L.C."/>
            <person name="Gould V.C."/>
            <person name="Dow J.M."/>
            <person name="Vernikos G.S."/>
            <person name="Okazaki A."/>
            <person name="Sebaihia M."/>
            <person name="Saunders D."/>
            <person name="Arrowsmith C."/>
            <person name="Carver T."/>
            <person name="Peters N."/>
            <person name="Adlem E."/>
            <person name="Kerhornou A."/>
            <person name="Lord A."/>
            <person name="Murphy L."/>
            <person name="Seeger K."/>
            <person name="Squares R."/>
            <person name="Rutter S."/>
            <person name="Quail M.A."/>
            <person name="Rajandream M.A."/>
            <person name="Harris D."/>
            <person name="Churcher C."/>
            <person name="Bentley S.D."/>
            <person name="Parkhill J."/>
            <person name="Thomson N.R."/>
            <person name="Avison M.B."/>
        </authorList>
    </citation>
    <scope>NUCLEOTIDE SEQUENCE [LARGE SCALE GENOMIC DNA]</scope>
    <source>
        <strain>K279a</strain>
    </source>
</reference>
<gene>
    <name evidence="1" type="primary">kmo</name>
    <name type="ordered locus">Smlt3161</name>
</gene>
<name>KMO_STRMK</name>
<keyword id="KW-0274">FAD</keyword>
<keyword id="KW-0285">Flavoprotein</keyword>
<keyword id="KW-0503">Monooxygenase</keyword>
<keyword id="KW-0521">NADP</keyword>
<keyword id="KW-0560">Oxidoreductase</keyword>
<keyword id="KW-0662">Pyridine nucleotide biosynthesis</keyword>
<keyword id="KW-1185">Reference proteome</keyword>
<accession>B2FL98</accession>